<name>UVRC_PSEF5</name>
<keyword id="KW-0963">Cytoplasm</keyword>
<keyword id="KW-0227">DNA damage</keyword>
<keyword id="KW-0228">DNA excision</keyword>
<keyword id="KW-0234">DNA repair</keyword>
<keyword id="KW-0267">Excision nuclease</keyword>
<keyword id="KW-0742">SOS response</keyword>
<comment type="function">
    <text evidence="1">The UvrABC repair system catalyzes the recognition and processing of DNA lesions. UvrC both incises the 5' and 3' sides of the lesion. The N-terminal half is responsible for the 3' incision and the C-terminal half is responsible for the 5' incision.</text>
</comment>
<comment type="subunit">
    <text evidence="1">Interacts with UvrB in an incision complex.</text>
</comment>
<comment type="subcellular location">
    <subcellularLocation>
        <location evidence="1">Cytoplasm</location>
    </subcellularLocation>
</comment>
<comment type="similarity">
    <text evidence="1">Belongs to the UvrC family.</text>
</comment>
<dbReference type="EMBL" id="CP000076">
    <property type="protein sequence ID" value="AAY92828.1"/>
    <property type="molecule type" value="Genomic_DNA"/>
</dbReference>
<dbReference type="RefSeq" id="WP_011061840.1">
    <property type="nucleotide sequence ID" value="NC_004129.6"/>
</dbReference>
<dbReference type="SMR" id="Q4KAR9"/>
<dbReference type="STRING" id="220664.PFL_3562"/>
<dbReference type="KEGG" id="pfl:PFL_3562"/>
<dbReference type="PATRIC" id="fig|220664.5.peg.3640"/>
<dbReference type="eggNOG" id="COG0322">
    <property type="taxonomic scope" value="Bacteria"/>
</dbReference>
<dbReference type="HOGENOM" id="CLU_014841_3_0_6"/>
<dbReference type="Proteomes" id="UP000008540">
    <property type="component" value="Chromosome"/>
</dbReference>
<dbReference type="GO" id="GO:0005737">
    <property type="term" value="C:cytoplasm"/>
    <property type="evidence" value="ECO:0007669"/>
    <property type="project" value="UniProtKB-SubCell"/>
</dbReference>
<dbReference type="GO" id="GO:0009380">
    <property type="term" value="C:excinuclease repair complex"/>
    <property type="evidence" value="ECO:0007669"/>
    <property type="project" value="InterPro"/>
</dbReference>
<dbReference type="GO" id="GO:0003677">
    <property type="term" value="F:DNA binding"/>
    <property type="evidence" value="ECO:0007669"/>
    <property type="project" value="UniProtKB-UniRule"/>
</dbReference>
<dbReference type="GO" id="GO:0009381">
    <property type="term" value="F:excinuclease ABC activity"/>
    <property type="evidence" value="ECO:0007669"/>
    <property type="project" value="UniProtKB-UniRule"/>
</dbReference>
<dbReference type="GO" id="GO:0006289">
    <property type="term" value="P:nucleotide-excision repair"/>
    <property type="evidence" value="ECO:0007669"/>
    <property type="project" value="UniProtKB-UniRule"/>
</dbReference>
<dbReference type="GO" id="GO:0009432">
    <property type="term" value="P:SOS response"/>
    <property type="evidence" value="ECO:0007669"/>
    <property type="project" value="UniProtKB-UniRule"/>
</dbReference>
<dbReference type="CDD" id="cd10434">
    <property type="entry name" value="GIY-YIG_UvrC_Cho"/>
    <property type="match status" value="1"/>
</dbReference>
<dbReference type="FunFam" id="1.10.150.20:FF:000005">
    <property type="entry name" value="UvrABC system protein C"/>
    <property type="match status" value="1"/>
</dbReference>
<dbReference type="FunFam" id="3.30.420.340:FF:000001">
    <property type="entry name" value="UvrABC system protein C"/>
    <property type="match status" value="1"/>
</dbReference>
<dbReference type="FunFam" id="3.40.1440.10:FF:000001">
    <property type="entry name" value="UvrABC system protein C"/>
    <property type="match status" value="1"/>
</dbReference>
<dbReference type="Gene3D" id="1.10.150.20">
    <property type="entry name" value="5' to 3' exonuclease, C-terminal subdomain"/>
    <property type="match status" value="1"/>
</dbReference>
<dbReference type="Gene3D" id="3.40.1440.10">
    <property type="entry name" value="GIY-YIG endonuclease"/>
    <property type="match status" value="1"/>
</dbReference>
<dbReference type="Gene3D" id="4.10.860.10">
    <property type="entry name" value="UVR domain"/>
    <property type="match status" value="1"/>
</dbReference>
<dbReference type="Gene3D" id="3.30.420.340">
    <property type="entry name" value="UvrC, RNAse H endonuclease domain"/>
    <property type="match status" value="1"/>
</dbReference>
<dbReference type="HAMAP" id="MF_00203">
    <property type="entry name" value="UvrC"/>
    <property type="match status" value="1"/>
</dbReference>
<dbReference type="InterPro" id="IPR000305">
    <property type="entry name" value="GIY-YIG_endonuc"/>
</dbReference>
<dbReference type="InterPro" id="IPR035901">
    <property type="entry name" value="GIY-YIG_endonuc_sf"/>
</dbReference>
<dbReference type="InterPro" id="IPR047296">
    <property type="entry name" value="GIY-YIG_UvrC_Cho"/>
</dbReference>
<dbReference type="InterPro" id="IPR003583">
    <property type="entry name" value="Hlx-hairpin-Hlx_DNA-bd_motif"/>
</dbReference>
<dbReference type="InterPro" id="IPR010994">
    <property type="entry name" value="RuvA_2-like"/>
</dbReference>
<dbReference type="InterPro" id="IPR001943">
    <property type="entry name" value="UVR_dom"/>
</dbReference>
<dbReference type="InterPro" id="IPR036876">
    <property type="entry name" value="UVR_dom_sf"/>
</dbReference>
<dbReference type="InterPro" id="IPR050066">
    <property type="entry name" value="UvrABC_protein_C"/>
</dbReference>
<dbReference type="InterPro" id="IPR004791">
    <property type="entry name" value="UvrC"/>
</dbReference>
<dbReference type="InterPro" id="IPR001162">
    <property type="entry name" value="UvrC_RNase_H_dom"/>
</dbReference>
<dbReference type="InterPro" id="IPR038476">
    <property type="entry name" value="UvrC_RNase_H_dom_sf"/>
</dbReference>
<dbReference type="NCBIfam" id="NF001824">
    <property type="entry name" value="PRK00558.1-5"/>
    <property type="match status" value="1"/>
</dbReference>
<dbReference type="NCBIfam" id="TIGR00194">
    <property type="entry name" value="uvrC"/>
    <property type="match status" value="1"/>
</dbReference>
<dbReference type="PANTHER" id="PTHR30562:SF1">
    <property type="entry name" value="UVRABC SYSTEM PROTEIN C"/>
    <property type="match status" value="1"/>
</dbReference>
<dbReference type="PANTHER" id="PTHR30562">
    <property type="entry name" value="UVRC/OXIDOREDUCTASE"/>
    <property type="match status" value="1"/>
</dbReference>
<dbReference type="Pfam" id="PF01541">
    <property type="entry name" value="GIY-YIG"/>
    <property type="match status" value="1"/>
</dbReference>
<dbReference type="Pfam" id="PF14520">
    <property type="entry name" value="HHH_5"/>
    <property type="match status" value="1"/>
</dbReference>
<dbReference type="Pfam" id="PF02151">
    <property type="entry name" value="UVR"/>
    <property type="match status" value="1"/>
</dbReference>
<dbReference type="Pfam" id="PF22920">
    <property type="entry name" value="UvrC_RNaseH"/>
    <property type="match status" value="1"/>
</dbReference>
<dbReference type="Pfam" id="PF08459">
    <property type="entry name" value="UvrC_RNaseH_dom"/>
    <property type="match status" value="1"/>
</dbReference>
<dbReference type="SMART" id="SM00465">
    <property type="entry name" value="GIYc"/>
    <property type="match status" value="1"/>
</dbReference>
<dbReference type="SMART" id="SM00278">
    <property type="entry name" value="HhH1"/>
    <property type="match status" value="2"/>
</dbReference>
<dbReference type="SUPFAM" id="SSF46600">
    <property type="entry name" value="C-terminal UvrC-binding domain of UvrB"/>
    <property type="match status" value="1"/>
</dbReference>
<dbReference type="SUPFAM" id="SSF82771">
    <property type="entry name" value="GIY-YIG endonuclease"/>
    <property type="match status" value="1"/>
</dbReference>
<dbReference type="SUPFAM" id="SSF47781">
    <property type="entry name" value="RuvA domain 2-like"/>
    <property type="match status" value="1"/>
</dbReference>
<dbReference type="PROSITE" id="PS50164">
    <property type="entry name" value="GIY_YIG"/>
    <property type="match status" value="1"/>
</dbReference>
<dbReference type="PROSITE" id="PS50151">
    <property type="entry name" value="UVR"/>
    <property type="match status" value="1"/>
</dbReference>
<dbReference type="PROSITE" id="PS50165">
    <property type="entry name" value="UVRC"/>
    <property type="match status" value="1"/>
</dbReference>
<sequence>MTEQFDPSAFLSTCSGRPGVYRMFDSDARLLYVGKAKNLKNRLSSYFRKTGQAPKTAALVARIAQIETTITANETEALLLEQTLIKEWRPPYNILLRDDKSYPYVFLSDGDFPRFSIHRGAKKQKGKYFGPYPSAGAIRESLSLLQKTFMVRQCEDSYYKNRTRPCLQYQIKRCKAPCVGLVEPEVYAEDVRHSVMFLEGRSNALTDELSTAMEAAASTLDFEKAAELRDQISLLRRVQDQQSMEGGTGDVDVVAAFVNPGGACVHLISVRGGRVLGSKNFFPQVGIEEDVAEVMSAFLGQYFVSSPERDLPSELIVNVVHEDFPTLIAAIDELRGRELTISHRVRGTRARWQQLAVTNAEQALSARLANRQHVAARFEALAEVLNLDEPPQRLECYDISHSSGEATVASCVVFGPEGPLKSDYRRYNIEGVTAGDDYAAMHQALTRRFSKLKDGEGKLPDILLVDGGKGQLSMARDVLNELAVPDLILLGVAKGATRKAGFETLYLNDAAHEFTLKGDSPALHLIQQIRDEAHRFAITGHRARRGKTRRTSTLEGVAGVGPKRRRDLLKHFGGLQELSRASIDEIAKAPGISKKLAELIYANLHSE</sequence>
<protein>
    <recommendedName>
        <fullName evidence="1">UvrABC system protein C</fullName>
        <shortName evidence="1">Protein UvrC</shortName>
    </recommendedName>
    <alternativeName>
        <fullName evidence="1">Excinuclease ABC subunit C</fullName>
    </alternativeName>
</protein>
<reference key="1">
    <citation type="journal article" date="2005" name="Nat. Biotechnol.">
        <title>Complete genome sequence of the plant commensal Pseudomonas fluorescens Pf-5.</title>
        <authorList>
            <person name="Paulsen I.T."/>
            <person name="Press C.M."/>
            <person name="Ravel J."/>
            <person name="Kobayashi D.Y."/>
            <person name="Myers G.S.A."/>
            <person name="Mavrodi D.V."/>
            <person name="DeBoy R.T."/>
            <person name="Seshadri R."/>
            <person name="Ren Q."/>
            <person name="Madupu R."/>
            <person name="Dodson R.J."/>
            <person name="Durkin A.S."/>
            <person name="Brinkac L.M."/>
            <person name="Daugherty S.C."/>
            <person name="Sullivan S.A."/>
            <person name="Rosovitz M.J."/>
            <person name="Gwinn M.L."/>
            <person name="Zhou L."/>
            <person name="Schneider D.J."/>
            <person name="Cartinhour S.W."/>
            <person name="Nelson W.C."/>
            <person name="Weidman J."/>
            <person name="Watkins K."/>
            <person name="Tran K."/>
            <person name="Khouri H."/>
            <person name="Pierson E.A."/>
            <person name="Pierson L.S. III"/>
            <person name="Thomashow L.S."/>
            <person name="Loper J.E."/>
        </authorList>
    </citation>
    <scope>NUCLEOTIDE SEQUENCE [LARGE SCALE GENOMIC DNA]</scope>
    <source>
        <strain>ATCC BAA-477 / NRRL B-23932 / Pf-5</strain>
    </source>
</reference>
<evidence type="ECO:0000255" key="1">
    <source>
        <dbReference type="HAMAP-Rule" id="MF_00203"/>
    </source>
</evidence>
<proteinExistence type="inferred from homology"/>
<gene>
    <name evidence="1" type="primary">uvrC</name>
    <name type="ordered locus">PFL_3562</name>
</gene>
<organism>
    <name type="scientific">Pseudomonas fluorescens (strain ATCC BAA-477 / NRRL B-23932 / Pf-5)</name>
    <dbReference type="NCBI Taxonomy" id="220664"/>
    <lineage>
        <taxon>Bacteria</taxon>
        <taxon>Pseudomonadati</taxon>
        <taxon>Pseudomonadota</taxon>
        <taxon>Gammaproteobacteria</taxon>
        <taxon>Pseudomonadales</taxon>
        <taxon>Pseudomonadaceae</taxon>
        <taxon>Pseudomonas</taxon>
    </lineage>
</organism>
<feature type="chain" id="PRO_0000227462" description="UvrABC system protein C">
    <location>
        <begin position="1"/>
        <end position="607"/>
    </location>
</feature>
<feature type="domain" description="GIY-YIG" evidence="1">
    <location>
        <begin position="16"/>
        <end position="94"/>
    </location>
</feature>
<feature type="domain" description="UVR" evidence="1">
    <location>
        <begin position="203"/>
        <end position="238"/>
    </location>
</feature>
<accession>Q4KAR9</accession>